<proteinExistence type="evidence at protein level"/>
<gene>
    <name evidence="3" type="primary">MIP11</name>
    <name type="ORF">MGG_04719</name>
</gene>
<sequence>MAEQLILKGTLEGHNGWVTSLATSMENPNMLLSSSRDKTLIIWNLTRDETSYGYPKRSLKGHSHIVSDCVISSDGAYALSASWDKTLRLWELATGTTTRRFVGHTNDVLSVSFSADNRQIVSGSRDRSIKLWNTLGDCKYTITEKGHSEWVSCVRFSPNPQNPVIVSSGWDKLVKVWELSSCKLQTDHIGHTGYINTVTISPDGSLCASGGKDGTTMLWDLNESKHLYSLNANDEIHALVFSPNRYWLCAATASSIIIFDLEKKSKVDELKPEFAAVGKKSREPECISLAWSADGQTLFAGYTDNIIRAWGVMSRA</sequence>
<accession>G4MQX3</accession>
<feature type="chain" id="PRO_0000453107" description="MST50-interacting protein 11">
    <location>
        <begin position="1"/>
        <end position="316"/>
    </location>
</feature>
<feature type="repeat" description="WD 1" evidence="1">
    <location>
        <begin position="13"/>
        <end position="53"/>
    </location>
</feature>
<feature type="repeat" description="WD 2" evidence="1">
    <location>
        <begin position="61"/>
        <end position="100"/>
    </location>
</feature>
<feature type="repeat" description="WD 3" evidence="1">
    <location>
        <begin position="103"/>
        <end position="142"/>
    </location>
</feature>
<feature type="repeat" description="WD 4" evidence="1">
    <location>
        <begin position="146"/>
        <end position="187"/>
    </location>
</feature>
<feature type="repeat" description="WD 5" evidence="1">
    <location>
        <begin position="190"/>
        <end position="229"/>
    </location>
</feature>
<feature type="repeat" description="WD 6" evidence="1">
    <location>
        <begin position="231"/>
        <end position="269"/>
    </location>
</feature>
<feature type="repeat" description="WD 7" evidence="1">
    <location>
        <begin position="281"/>
        <end position="316"/>
    </location>
</feature>
<reference key="1">
    <citation type="journal article" date="2005" name="Nature">
        <title>The genome sequence of the rice blast fungus Magnaporthe grisea.</title>
        <authorList>
            <person name="Dean R.A."/>
            <person name="Talbot N.J."/>
            <person name="Ebbole D.J."/>
            <person name="Farman M.L."/>
            <person name="Mitchell T.K."/>
            <person name="Orbach M.J."/>
            <person name="Thon M.R."/>
            <person name="Kulkarni R."/>
            <person name="Xu J.-R."/>
            <person name="Pan H."/>
            <person name="Read N.D."/>
            <person name="Lee Y.-H."/>
            <person name="Carbone I."/>
            <person name="Brown D."/>
            <person name="Oh Y.Y."/>
            <person name="Donofrio N."/>
            <person name="Jeong J.S."/>
            <person name="Soanes D.M."/>
            <person name="Djonovic S."/>
            <person name="Kolomiets E."/>
            <person name="Rehmeyer C."/>
            <person name="Li W."/>
            <person name="Harding M."/>
            <person name="Kim S."/>
            <person name="Lebrun M.-H."/>
            <person name="Bohnert H."/>
            <person name="Coughlan S."/>
            <person name="Butler J."/>
            <person name="Calvo S.E."/>
            <person name="Ma L.-J."/>
            <person name="Nicol R."/>
            <person name="Purcell S."/>
            <person name="Nusbaum C."/>
            <person name="Galagan J.E."/>
            <person name="Birren B.W."/>
        </authorList>
    </citation>
    <scope>NUCLEOTIDE SEQUENCE [LARGE SCALE GENOMIC DNA]</scope>
    <source>
        <strain>70-15 / ATCC MYA-4617 / FGSC 8958</strain>
    </source>
</reference>
<reference key="2">
    <citation type="journal article" date="2017" name="Environ. Microbiol.">
        <title>MST50 is involved in multiple MAP kinase signaling pathways in Magnaporthe oryzae.</title>
        <authorList>
            <person name="Li G."/>
            <person name="Zhang X."/>
            <person name="Tian H."/>
            <person name="Choi Y.E."/>
            <person name="Tao W.A."/>
            <person name="Xu J.R."/>
        </authorList>
    </citation>
    <scope>FUNCTION</scope>
    <scope>INTERACTION WITH MTS50 AND MCK1</scope>
    <scope>DISRUPTION PHENOTYPE</scope>
</reference>
<comment type="function">
    <text evidence="2">Involved in regulating the cell wall integrity and MPS1 activation via its interaction with the MAPKKK MCK1.</text>
</comment>
<comment type="subunit">
    <text evidence="2">Interacts with MST50 and MCK1.</text>
</comment>
<comment type="disruption phenotype">
    <text evidence="2">Abolishes the pathogenicity.</text>
</comment>
<comment type="similarity">
    <text evidence="4">Belongs to the WD repeat G protein beta family. Ribosomal protein RACK1 subfamily.</text>
</comment>
<organism>
    <name type="scientific">Pyricularia oryzae (strain 70-15 / ATCC MYA-4617 / FGSC 8958)</name>
    <name type="common">Rice blast fungus</name>
    <name type="synonym">Magnaporthe oryzae</name>
    <dbReference type="NCBI Taxonomy" id="242507"/>
    <lineage>
        <taxon>Eukaryota</taxon>
        <taxon>Fungi</taxon>
        <taxon>Dikarya</taxon>
        <taxon>Ascomycota</taxon>
        <taxon>Pezizomycotina</taxon>
        <taxon>Sordariomycetes</taxon>
        <taxon>Sordariomycetidae</taxon>
        <taxon>Magnaporthales</taxon>
        <taxon>Pyriculariaceae</taxon>
        <taxon>Pyricularia</taxon>
    </lineage>
</organism>
<evidence type="ECO:0000255" key="1"/>
<evidence type="ECO:0000269" key="2">
    <source>
    </source>
</evidence>
<evidence type="ECO:0000303" key="3">
    <source>
    </source>
</evidence>
<evidence type="ECO:0000305" key="4"/>
<keyword id="KW-1185">Reference proteome</keyword>
<keyword id="KW-0677">Repeat</keyword>
<keyword id="KW-0843">Virulence</keyword>
<keyword id="KW-0853">WD repeat</keyword>
<name>MIP11_PYRO7</name>
<protein>
    <recommendedName>
        <fullName evidence="3">MST50-interacting protein 11</fullName>
    </recommendedName>
</protein>
<dbReference type="EMBL" id="CM001231">
    <property type="protein sequence ID" value="EHA58204.1"/>
    <property type="molecule type" value="Genomic_DNA"/>
</dbReference>
<dbReference type="RefSeq" id="XP_003710816.1">
    <property type="nucleotide sequence ID" value="XM_003710768.1"/>
</dbReference>
<dbReference type="SMR" id="G4MQX3"/>
<dbReference type="FunCoup" id="G4MQX3">
    <property type="interactions" value="1318"/>
</dbReference>
<dbReference type="STRING" id="242507.G4MQX3"/>
<dbReference type="EnsemblFungi" id="MGG_04719T0">
    <property type="protein sequence ID" value="MGG_04719T0"/>
    <property type="gene ID" value="MGG_04719"/>
</dbReference>
<dbReference type="GeneID" id="2677887"/>
<dbReference type="KEGG" id="mgr:MGG_04719"/>
<dbReference type="VEuPathDB" id="FungiDB:MGG_04719"/>
<dbReference type="eggNOG" id="KOG0279">
    <property type="taxonomic scope" value="Eukaryota"/>
</dbReference>
<dbReference type="HOGENOM" id="CLU_000288_57_7_1"/>
<dbReference type="InParanoid" id="G4MQX3"/>
<dbReference type="OMA" id="NCKLKIN"/>
<dbReference type="OrthoDB" id="7875889at2759"/>
<dbReference type="PHI-base" id="PHI:8109"/>
<dbReference type="Proteomes" id="UP000009058">
    <property type="component" value="Chromosome 1"/>
</dbReference>
<dbReference type="GO" id="GO:0022627">
    <property type="term" value="C:cytosolic small ribosomal subunit"/>
    <property type="evidence" value="ECO:0007669"/>
    <property type="project" value="EnsemblFungi"/>
</dbReference>
<dbReference type="GO" id="GO:0001965">
    <property type="term" value="F:G-protein alpha-subunit binding"/>
    <property type="evidence" value="ECO:0007669"/>
    <property type="project" value="EnsemblFungi"/>
</dbReference>
<dbReference type="GO" id="GO:0005092">
    <property type="term" value="F:GDP-dissociation inhibitor activity"/>
    <property type="evidence" value="ECO:0007669"/>
    <property type="project" value="EnsemblFungi"/>
</dbReference>
<dbReference type="GO" id="GO:0043495">
    <property type="term" value="F:protein-membrane adaptor activity"/>
    <property type="evidence" value="ECO:0007669"/>
    <property type="project" value="EnsemblFungi"/>
</dbReference>
<dbReference type="GO" id="GO:0043022">
    <property type="term" value="F:ribosome binding"/>
    <property type="evidence" value="ECO:0007669"/>
    <property type="project" value="EnsemblFungi"/>
</dbReference>
<dbReference type="GO" id="GO:0030546">
    <property type="term" value="F:signaling receptor activator activity"/>
    <property type="evidence" value="ECO:0007669"/>
    <property type="project" value="EnsemblFungi"/>
</dbReference>
<dbReference type="GO" id="GO:0003735">
    <property type="term" value="F:structural constituent of ribosome"/>
    <property type="evidence" value="ECO:0007669"/>
    <property type="project" value="EnsemblFungi"/>
</dbReference>
<dbReference type="GO" id="GO:0045182">
    <property type="term" value="F:translation regulator activity"/>
    <property type="evidence" value="ECO:0007669"/>
    <property type="project" value="InterPro"/>
</dbReference>
<dbReference type="GO" id="GO:0007186">
    <property type="term" value="P:G protein-coupled receptor signaling pathway"/>
    <property type="evidence" value="ECO:0007669"/>
    <property type="project" value="EnsemblFungi"/>
</dbReference>
<dbReference type="GO" id="GO:0140469">
    <property type="term" value="P:GCN2-mediated signaling"/>
    <property type="evidence" value="ECO:0007669"/>
    <property type="project" value="EnsemblFungi"/>
</dbReference>
<dbReference type="GO" id="GO:1990145">
    <property type="term" value="P:maintenance of translational fidelity"/>
    <property type="evidence" value="ECO:0007669"/>
    <property type="project" value="EnsemblFungi"/>
</dbReference>
<dbReference type="GO" id="GO:0061157">
    <property type="term" value="P:mRNA destabilization"/>
    <property type="evidence" value="ECO:0007669"/>
    <property type="project" value="EnsemblFungi"/>
</dbReference>
<dbReference type="GO" id="GO:1903138">
    <property type="term" value="P:negative regulation of cell integrity MAPK cascade"/>
    <property type="evidence" value="ECO:0007669"/>
    <property type="project" value="EnsemblFungi"/>
</dbReference>
<dbReference type="GO" id="GO:1902660">
    <property type="term" value="P:negative regulation of glucose mediated signaling pathway"/>
    <property type="evidence" value="ECO:0007669"/>
    <property type="project" value="EnsemblFungi"/>
</dbReference>
<dbReference type="GO" id="GO:1903753">
    <property type="term" value="P:negative regulation of p38MAPK cascade"/>
    <property type="evidence" value="ECO:0007669"/>
    <property type="project" value="EnsemblFungi"/>
</dbReference>
<dbReference type="GO" id="GO:2001125">
    <property type="term" value="P:negative regulation of translational frameshifting"/>
    <property type="evidence" value="ECO:0007669"/>
    <property type="project" value="EnsemblFungi"/>
</dbReference>
<dbReference type="GO" id="GO:0070651">
    <property type="term" value="P:nonfunctional rRNA decay"/>
    <property type="evidence" value="ECO:0007669"/>
    <property type="project" value="EnsemblFungi"/>
</dbReference>
<dbReference type="GO" id="GO:0010508">
    <property type="term" value="P:positive regulation of autophagy"/>
    <property type="evidence" value="ECO:0007669"/>
    <property type="project" value="EnsemblFungi"/>
</dbReference>
<dbReference type="GO" id="GO:0031139">
    <property type="term" value="P:positive regulation of conjugation with cellular fusion"/>
    <property type="evidence" value="ECO:0007669"/>
    <property type="project" value="EnsemblFungi"/>
</dbReference>
<dbReference type="GO" id="GO:0006521">
    <property type="term" value="P:regulation of amino acid metabolic process"/>
    <property type="evidence" value="ECO:0007669"/>
    <property type="project" value="EnsemblFungi"/>
</dbReference>
<dbReference type="GO" id="GO:2000765">
    <property type="term" value="P:regulation of cytoplasmic translation"/>
    <property type="evidence" value="ECO:0007669"/>
    <property type="project" value="EnsemblFungi"/>
</dbReference>
<dbReference type="GO" id="GO:0072344">
    <property type="term" value="P:rescue of stalled ribosome"/>
    <property type="evidence" value="ECO:0007669"/>
    <property type="project" value="EnsemblFungi"/>
</dbReference>
<dbReference type="GO" id="GO:0141014">
    <property type="term" value="P:ribosome hibernation"/>
    <property type="evidence" value="ECO:0007669"/>
    <property type="project" value="EnsemblFungi"/>
</dbReference>
<dbReference type="GO" id="GO:1990116">
    <property type="term" value="P:ribosome-associated ubiquitin-dependent protein catabolic process"/>
    <property type="evidence" value="ECO:0007669"/>
    <property type="project" value="EnsemblFungi"/>
</dbReference>
<dbReference type="CDD" id="cd00200">
    <property type="entry name" value="WD40"/>
    <property type="match status" value="1"/>
</dbReference>
<dbReference type="FunFam" id="2.130.10.10:FF:000039">
    <property type="entry name" value="Guanine nucleotide-binding protein subunit beta-like protein"/>
    <property type="match status" value="1"/>
</dbReference>
<dbReference type="Gene3D" id="2.130.10.10">
    <property type="entry name" value="YVTN repeat-like/Quinoprotein amine dehydrogenase"/>
    <property type="match status" value="1"/>
</dbReference>
<dbReference type="InterPro" id="IPR020472">
    <property type="entry name" value="G-protein_beta_WD-40_rep"/>
</dbReference>
<dbReference type="InterPro" id="IPR045223">
    <property type="entry name" value="RACK1-like"/>
</dbReference>
<dbReference type="InterPro" id="IPR015943">
    <property type="entry name" value="WD40/YVTN_repeat-like_dom_sf"/>
</dbReference>
<dbReference type="InterPro" id="IPR019775">
    <property type="entry name" value="WD40_repeat_CS"/>
</dbReference>
<dbReference type="InterPro" id="IPR036322">
    <property type="entry name" value="WD40_repeat_dom_sf"/>
</dbReference>
<dbReference type="InterPro" id="IPR001680">
    <property type="entry name" value="WD40_rpt"/>
</dbReference>
<dbReference type="PANTHER" id="PTHR19868">
    <property type="entry name" value="RECEPTOR FOR ACTIVATED PROTEIN KINASE C RACK1"/>
    <property type="match status" value="1"/>
</dbReference>
<dbReference type="Pfam" id="PF00400">
    <property type="entry name" value="WD40"/>
    <property type="match status" value="6"/>
</dbReference>
<dbReference type="PRINTS" id="PR00320">
    <property type="entry name" value="GPROTEINBRPT"/>
</dbReference>
<dbReference type="SMART" id="SM00320">
    <property type="entry name" value="WD40"/>
    <property type="match status" value="7"/>
</dbReference>
<dbReference type="SUPFAM" id="SSF50978">
    <property type="entry name" value="WD40 repeat-like"/>
    <property type="match status" value="1"/>
</dbReference>
<dbReference type="PROSITE" id="PS00678">
    <property type="entry name" value="WD_REPEATS_1"/>
    <property type="match status" value="5"/>
</dbReference>
<dbReference type="PROSITE" id="PS50082">
    <property type="entry name" value="WD_REPEATS_2"/>
    <property type="match status" value="6"/>
</dbReference>
<dbReference type="PROSITE" id="PS50294">
    <property type="entry name" value="WD_REPEATS_REGION"/>
    <property type="match status" value="1"/>
</dbReference>